<organism>
    <name type="scientific">Klebsiella pneumoniae (strain 342)</name>
    <dbReference type="NCBI Taxonomy" id="507522"/>
    <lineage>
        <taxon>Bacteria</taxon>
        <taxon>Pseudomonadati</taxon>
        <taxon>Pseudomonadota</taxon>
        <taxon>Gammaproteobacteria</taxon>
        <taxon>Enterobacterales</taxon>
        <taxon>Enterobacteriaceae</taxon>
        <taxon>Klebsiella/Raoultella group</taxon>
        <taxon>Klebsiella</taxon>
        <taxon>Klebsiella pneumoniae complex</taxon>
    </lineage>
</organism>
<protein>
    <recommendedName>
        <fullName evidence="1">Glycerol-3-phosphate acyltransferase</fullName>
        <shortName evidence="1">GPAT</shortName>
        <ecNumber evidence="1">2.3.1.15</ecNumber>
    </recommendedName>
</protein>
<keyword id="KW-0012">Acyltransferase</keyword>
<keyword id="KW-0997">Cell inner membrane</keyword>
<keyword id="KW-1003">Cell membrane</keyword>
<keyword id="KW-0444">Lipid biosynthesis</keyword>
<keyword id="KW-0443">Lipid metabolism</keyword>
<keyword id="KW-0472">Membrane</keyword>
<keyword id="KW-0594">Phospholipid biosynthesis</keyword>
<keyword id="KW-1208">Phospholipid metabolism</keyword>
<keyword id="KW-0808">Transferase</keyword>
<sequence length="807" mass="91447">MSGWQRIYYKLLNLPLRVLVKSKSIPAEPAQELGLDTSRPVMYVLPYNSKADLLTLRAQCLAHDLPDPLEPLEIDGALLPRYVFIHGGPRVFTYYTPKEESIKLFHDYLDLHRNHPDLDVQMVPVSVMFGRSPGREKGEVNPPLRMLNGIQKFFAVSWLGRDSFVRFSPSVSLRRMADEHGTDKIIAQKLARVARMHFARQRLAAVGPRLPARQDLFNKLLASKAIARAVEDEARSKKISHEKAQQNAIALMEEIAANFSYEMIRLTDRILGFTWNRLYQGINVHNAERVRQLAHDGHEIVYVPCHRSHMDYLLLSYVLYHQGLVPPHIAAGINLNFWPAGPIFRRLGAFFIRRTFKGNKLYSTVFREYLGELFSRGYSVEYFVEGGRSRTGRLLDPKTGTLSMTIQAMLRGGTRPITLVPIYIGYEHVMEVGTYAKELRGATKEKESLPQMVRGLSKLRNLGQGYVNFGEPLPLMTYLNHHVPEWREAIDPIEAIRPSWLTPTVNNIAADLMVRINNAGAANAMNLCCTALLASRQRSLTREQLTQQLECYLALLRNVPYSPDATTPSASASELIDHALQMNKFEVEKDTIGDIIILPREQAVLMTYYRNNIAHMLVIPSLLAALVTQHRQLSRTEVLRHVETLYPFLKAELFLRWEKAELAGVVDALIAEMLRQELIVVDGEVMSLNPSHSRSLQLLAAGARETLQRYAITFWLLSANPSINRSSLEKESRTVAQRLSVLHGINAPEFFDKAVFSTLVLTLRDEGYISDTGDAEPEETLKVYRMLADLITSDVRLTIESVTQDDA</sequence>
<accession>B5XXZ1</accession>
<name>PLSB_KLEP3</name>
<gene>
    <name evidence="1" type="primary">plsB</name>
    <name type="ordered locus">KPK_5247</name>
</gene>
<comment type="catalytic activity">
    <reaction evidence="1">
        <text>sn-glycerol 3-phosphate + an acyl-CoA = a 1-acyl-sn-glycero-3-phosphate + CoA</text>
        <dbReference type="Rhea" id="RHEA:15325"/>
        <dbReference type="ChEBI" id="CHEBI:57287"/>
        <dbReference type="ChEBI" id="CHEBI:57597"/>
        <dbReference type="ChEBI" id="CHEBI:57970"/>
        <dbReference type="ChEBI" id="CHEBI:58342"/>
        <dbReference type="EC" id="2.3.1.15"/>
    </reaction>
</comment>
<comment type="pathway">
    <text evidence="1">Phospholipid metabolism; CDP-diacylglycerol biosynthesis; CDP-diacylglycerol from sn-glycerol 3-phosphate: step 1/3.</text>
</comment>
<comment type="subcellular location">
    <subcellularLocation>
        <location evidence="1">Cell inner membrane</location>
        <topology evidence="1">Peripheral membrane protein</topology>
        <orientation evidence="1">Cytoplasmic side</orientation>
    </subcellularLocation>
</comment>
<comment type="domain">
    <text evidence="1">The HXXXXD motif is essential for acyltransferase activity and may constitute the binding site for the phosphate moiety of the glycerol-3-phosphate.</text>
</comment>
<comment type="similarity">
    <text evidence="1">Belongs to the GPAT/DAPAT family.</text>
</comment>
<evidence type="ECO:0000255" key="1">
    <source>
        <dbReference type="HAMAP-Rule" id="MF_00393"/>
    </source>
</evidence>
<proteinExistence type="inferred from homology"/>
<feature type="chain" id="PRO_1000123084" description="Glycerol-3-phosphate acyltransferase">
    <location>
        <begin position="1"/>
        <end position="807"/>
    </location>
</feature>
<feature type="short sequence motif" description="HXXXXD motif">
    <location>
        <begin position="305"/>
        <end position="310"/>
    </location>
</feature>
<reference key="1">
    <citation type="journal article" date="2008" name="PLoS Genet.">
        <title>Complete genome sequence of the N2-fixing broad host range endophyte Klebsiella pneumoniae 342 and virulence predictions verified in mice.</title>
        <authorList>
            <person name="Fouts D.E."/>
            <person name="Tyler H.L."/>
            <person name="DeBoy R.T."/>
            <person name="Daugherty S."/>
            <person name="Ren Q."/>
            <person name="Badger J.H."/>
            <person name="Durkin A.S."/>
            <person name="Huot H."/>
            <person name="Shrivastava S."/>
            <person name="Kothari S."/>
            <person name="Dodson R.J."/>
            <person name="Mohamoud Y."/>
            <person name="Khouri H."/>
            <person name="Roesch L.F.W."/>
            <person name="Krogfelt K.A."/>
            <person name="Struve C."/>
            <person name="Triplett E.W."/>
            <person name="Methe B.A."/>
        </authorList>
    </citation>
    <scope>NUCLEOTIDE SEQUENCE [LARGE SCALE GENOMIC DNA]</scope>
    <source>
        <strain>342</strain>
    </source>
</reference>
<dbReference type="EC" id="2.3.1.15" evidence="1"/>
<dbReference type="EMBL" id="CP000964">
    <property type="protein sequence ID" value="ACI07938.1"/>
    <property type="molecule type" value="Genomic_DNA"/>
</dbReference>
<dbReference type="SMR" id="B5XXZ1"/>
<dbReference type="KEGG" id="kpe:KPK_5247"/>
<dbReference type="HOGENOM" id="CLU_015407_0_0_6"/>
<dbReference type="UniPathway" id="UPA00557">
    <property type="reaction ID" value="UER00612"/>
</dbReference>
<dbReference type="Proteomes" id="UP000001734">
    <property type="component" value="Chromosome"/>
</dbReference>
<dbReference type="GO" id="GO:0005886">
    <property type="term" value="C:plasma membrane"/>
    <property type="evidence" value="ECO:0007669"/>
    <property type="project" value="UniProtKB-SubCell"/>
</dbReference>
<dbReference type="GO" id="GO:0004366">
    <property type="term" value="F:glycerol-3-phosphate O-acyltransferase activity"/>
    <property type="evidence" value="ECO:0007669"/>
    <property type="project" value="UniProtKB-UniRule"/>
</dbReference>
<dbReference type="GO" id="GO:0016024">
    <property type="term" value="P:CDP-diacylglycerol biosynthetic process"/>
    <property type="evidence" value="ECO:0007669"/>
    <property type="project" value="UniProtKB-UniRule"/>
</dbReference>
<dbReference type="GO" id="GO:0006631">
    <property type="term" value="P:fatty acid metabolic process"/>
    <property type="evidence" value="ECO:0007669"/>
    <property type="project" value="TreeGrafter"/>
</dbReference>
<dbReference type="CDD" id="cd07993">
    <property type="entry name" value="LPLAT_DHAPAT-like"/>
    <property type="match status" value="1"/>
</dbReference>
<dbReference type="HAMAP" id="MF_00393">
    <property type="entry name" value="Glyc3P_acyltrans"/>
    <property type="match status" value="1"/>
</dbReference>
<dbReference type="InterPro" id="IPR022284">
    <property type="entry name" value="GPAT/DHAPAT"/>
</dbReference>
<dbReference type="InterPro" id="IPR045520">
    <property type="entry name" value="GPAT/DHAPAT_C"/>
</dbReference>
<dbReference type="InterPro" id="IPR041728">
    <property type="entry name" value="GPAT/DHAPAT_LPLAT"/>
</dbReference>
<dbReference type="InterPro" id="IPR028354">
    <property type="entry name" value="GPAT_PlsB"/>
</dbReference>
<dbReference type="InterPro" id="IPR002123">
    <property type="entry name" value="Plipid/glycerol_acylTrfase"/>
</dbReference>
<dbReference type="NCBIfam" id="TIGR03703">
    <property type="entry name" value="plsB"/>
    <property type="match status" value="1"/>
</dbReference>
<dbReference type="NCBIfam" id="NF003441">
    <property type="entry name" value="PRK04974.1"/>
    <property type="match status" value="1"/>
</dbReference>
<dbReference type="PANTHER" id="PTHR12563:SF17">
    <property type="entry name" value="DIHYDROXYACETONE PHOSPHATE ACYLTRANSFERASE"/>
    <property type="match status" value="1"/>
</dbReference>
<dbReference type="PANTHER" id="PTHR12563">
    <property type="entry name" value="GLYCEROL-3-PHOSPHATE ACYLTRANSFERASE"/>
    <property type="match status" value="1"/>
</dbReference>
<dbReference type="Pfam" id="PF01553">
    <property type="entry name" value="Acyltransferase"/>
    <property type="match status" value="1"/>
</dbReference>
<dbReference type="Pfam" id="PF19277">
    <property type="entry name" value="GPAT_C"/>
    <property type="match status" value="1"/>
</dbReference>
<dbReference type="PIRSF" id="PIRSF500064">
    <property type="entry name" value="GPAT"/>
    <property type="match status" value="1"/>
</dbReference>
<dbReference type="PIRSF" id="PIRSF000437">
    <property type="entry name" value="GPAT_DHAPAT"/>
    <property type="match status" value="1"/>
</dbReference>
<dbReference type="SMART" id="SM00563">
    <property type="entry name" value="PlsC"/>
    <property type="match status" value="1"/>
</dbReference>
<dbReference type="SUPFAM" id="SSF69593">
    <property type="entry name" value="Glycerol-3-phosphate (1)-acyltransferase"/>
    <property type="match status" value="1"/>
</dbReference>